<accession>Q6SIF1</accession>
<accession>C8V4P2</accession>
<accession>Q5B5L0</accession>
<comment type="function">
    <text evidence="2">Component of the regulatory network controlling carbon source utilization through ubiquitination and deubiquitination involving creA, creB, creC, creD and acrB. May be involved in signaling by recognizing appropriately phosphorylated substrates via its arrestin domains and then recruit a HECT-type ubiquitin ligase such as hulA, leading to ubiquitination of the substrate, providing a link between ubiquitination and phosphorylation in protein regulation and stability.</text>
</comment>
<comment type="subunit">
    <text evidence="2">Interacts with hulA.</text>
</comment>
<comment type="similarity">
    <text evidence="3">Belongs to the arrestin family.</text>
</comment>
<sequence length="597" mass="65956">MALSFFSGGGSASHAKYFDIRLDEDYIVFRGGEQEAASAHLSGKLVLCVSEPISIKHIRLHLTGISRVCWHLPSSSAGGGRKNWRERVFYEKTWKFRDAGKSKTEILPAGNYEYPFDVILEGSMPESVEGLSDTYVTYRFKAEIGRKYAKDIVVRRPLRIIRTLESSALELSHAMSVENIWPNKIEYSISTPTKAVIFGTSIRVDFKLIPLLKGLGIGQIISQLIETHDLTLNPEDPDAIRNTYKTTRTIINDEHTIDEENSLEIIDEAAEGFQFSRTLDLPKTLTRCLQDTDTRGIKVRHKLKFRVQLLNPDGHISELRATLPVSIFISPNLAIDDNNNLVDSSPQTTQRALDDLAQQAPPLYGEHQFDQLYSEVDPSGYRTPGPGSGPGTPFGTLSRNLSAENLASMNAITHTDISASALHHRLVNLDLRGHGRVSASEHDHLGVPSDNGPPSGSNTHGSNTHAPGSPELSRRASDEDVHDNIPSGMATPFIPHSAELETLSRVPSYSTAVRSSVRPHDSDLPDYQAVVAETVHMSAPQSPQQAHIRGSGTGRGSDSYFSAPMDFFHRPAFLHSRSHSHSDDERRIRLTQARGRA</sequence>
<dbReference type="EMBL" id="AY458430">
    <property type="protein sequence ID" value="AAS10351.1"/>
    <property type="molecule type" value="Genomic_DNA"/>
</dbReference>
<dbReference type="EMBL" id="AACD01000067">
    <property type="protein sequence ID" value="EAA59431.1"/>
    <property type="molecule type" value="Genomic_DNA"/>
</dbReference>
<dbReference type="EMBL" id="BN001302">
    <property type="protein sequence ID" value="CBF74562.1"/>
    <property type="molecule type" value="Genomic_DNA"/>
</dbReference>
<dbReference type="RefSeq" id="XP_661774.1">
    <property type="nucleotide sequence ID" value="XM_656682.1"/>
</dbReference>
<dbReference type="SMR" id="Q6SIF1"/>
<dbReference type="FunCoup" id="Q6SIF1">
    <property type="interactions" value="78"/>
</dbReference>
<dbReference type="STRING" id="227321.Q6SIF1"/>
<dbReference type="EnsemblFungi" id="CBF74562">
    <property type="protein sequence ID" value="CBF74562"/>
    <property type="gene ID" value="ANIA_04170"/>
</dbReference>
<dbReference type="KEGG" id="ani:ANIA_04170"/>
<dbReference type="VEuPathDB" id="FungiDB:AN4170"/>
<dbReference type="eggNOG" id="KOG3780">
    <property type="taxonomic scope" value="Eukaryota"/>
</dbReference>
<dbReference type="HOGENOM" id="CLU_018982_2_0_1"/>
<dbReference type="InParanoid" id="Q6SIF1"/>
<dbReference type="OMA" id="GMATPFH"/>
<dbReference type="OrthoDB" id="2333384at2759"/>
<dbReference type="Proteomes" id="UP000000560">
    <property type="component" value="Chromosome II"/>
</dbReference>
<dbReference type="GO" id="GO:0005737">
    <property type="term" value="C:cytoplasm"/>
    <property type="evidence" value="ECO:0000318"/>
    <property type="project" value="GO_Central"/>
</dbReference>
<dbReference type="GO" id="GO:0005829">
    <property type="term" value="C:cytosol"/>
    <property type="evidence" value="ECO:0000318"/>
    <property type="project" value="GO_Central"/>
</dbReference>
<dbReference type="GO" id="GO:0005886">
    <property type="term" value="C:plasma membrane"/>
    <property type="evidence" value="ECO:0000318"/>
    <property type="project" value="GO_Central"/>
</dbReference>
<dbReference type="GO" id="GO:0030674">
    <property type="term" value="F:protein-macromolecule adaptor activity"/>
    <property type="evidence" value="ECO:0000318"/>
    <property type="project" value="GO_Central"/>
</dbReference>
<dbReference type="GO" id="GO:0031625">
    <property type="term" value="F:ubiquitin protein ligase binding"/>
    <property type="evidence" value="ECO:0000318"/>
    <property type="project" value="GO_Central"/>
</dbReference>
<dbReference type="GO" id="GO:0031396">
    <property type="term" value="P:regulation of protein ubiquitination"/>
    <property type="evidence" value="ECO:0000316"/>
    <property type="project" value="UniProtKB"/>
</dbReference>
<dbReference type="GO" id="GO:0009410">
    <property type="term" value="P:response to xenobiotic stimulus"/>
    <property type="evidence" value="ECO:0000315"/>
    <property type="project" value="UniProtKB"/>
</dbReference>
<dbReference type="GO" id="GO:0070086">
    <property type="term" value="P:ubiquitin-dependent endocytosis"/>
    <property type="evidence" value="ECO:0000318"/>
    <property type="project" value="GO_Central"/>
</dbReference>
<dbReference type="FunFam" id="2.60.40.640:FF:000018">
    <property type="entry name" value="HECT-type ubiquitin ligase-interacting protein creD"/>
    <property type="match status" value="1"/>
</dbReference>
<dbReference type="Gene3D" id="2.60.40.640">
    <property type="match status" value="1"/>
</dbReference>
<dbReference type="InterPro" id="IPR014752">
    <property type="entry name" value="Arrestin-like_C"/>
</dbReference>
<dbReference type="InterPro" id="IPR011021">
    <property type="entry name" value="Arrestin-like_N"/>
</dbReference>
<dbReference type="InterPro" id="IPR011022">
    <property type="entry name" value="Arrestin_C-like"/>
</dbReference>
<dbReference type="InterPro" id="IPR050357">
    <property type="entry name" value="Arrestin_domain-protein"/>
</dbReference>
<dbReference type="InterPro" id="IPR014756">
    <property type="entry name" value="Ig_E-set"/>
</dbReference>
<dbReference type="PANTHER" id="PTHR11188">
    <property type="entry name" value="ARRESTIN DOMAIN CONTAINING PROTEIN"/>
    <property type="match status" value="1"/>
</dbReference>
<dbReference type="PANTHER" id="PTHR11188:SF17">
    <property type="entry name" value="FI21816P1"/>
    <property type="match status" value="1"/>
</dbReference>
<dbReference type="Pfam" id="PF02752">
    <property type="entry name" value="Arrestin_C"/>
    <property type="match status" value="1"/>
</dbReference>
<dbReference type="Pfam" id="PF00339">
    <property type="entry name" value="Arrestin_N"/>
    <property type="match status" value="1"/>
</dbReference>
<dbReference type="SMART" id="SM01017">
    <property type="entry name" value="Arrestin_C"/>
    <property type="match status" value="1"/>
</dbReference>
<dbReference type="SUPFAM" id="SSF81296">
    <property type="entry name" value="E set domains"/>
    <property type="match status" value="1"/>
</dbReference>
<organism>
    <name type="scientific">Emericella nidulans (strain FGSC A4 / ATCC 38163 / CBS 112.46 / NRRL 194 / M139)</name>
    <name type="common">Aspergillus nidulans</name>
    <dbReference type="NCBI Taxonomy" id="227321"/>
    <lineage>
        <taxon>Eukaryota</taxon>
        <taxon>Fungi</taxon>
        <taxon>Dikarya</taxon>
        <taxon>Ascomycota</taxon>
        <taxon>Pezizomycotina</taxon>
        <taxon>Eurotiomycetes</taxon>
        <taxon>Eurotiomycetidae</taxon>
        <taxon>Eurotiales</taxon>
        <taxon>Aspergillaceae</taxon>
        <taxon>Aspergillus</taxon>
        <taxon>Aspergillus subgen. Nidulantes</taxon>
    </lineage>
</organism>
<gene>
    <name type="primary">creD</name>
    <name type="synonym">cre-34</name>
    <name type="ORF">AN4170</name>
</gene>
<name>CRED_EMENI</name>
<proteinExistence type="evidence at protein level"/>
<evidence type="ECO:0000256" key="1">
    <source>
        <dbReference type="SAM" id="MobiDB-lite"/>
    </source>
</evidence>
<evidence type="ECO:0000269" key="2">
    <source>
    </source>
</evidence>
<evidence type="ECO:0000305" key="3"/>
<protein>
    <recommendedName>
        <fullName>HECT-type ubiquitin ligase-interacting protein creD</fullName>
    </recommendedName>
    <alternativeName>
        <fullName>Carbon catabolite repressor D</fullName>
    </alternativeName>
</protein>
<feature type="chain" id="PRO_0000395701" description="HECT-type ubiquitin ligase-interacting protein creD">
    <location>
        <begin position="1"/>
        <end position="597"/>
    </location>
</feature>
<feature type="region of interest" description="Disordered" evidence="1">
    <location>
        <begin position="375"/>
        <end position="398"/>
    </location>
</feature>
<feature type="region of interest" description="Disordered" evidence="1">
    <location>
        <begin position="439"/>
        <end position="492"/>
    </location>
</feature>
<feature type="region of interest" description="Disordered" evidence="1">
    <location>
        <begin position="576"/>
        <end position="597"/>
    </location>
</feature>
<feature type="compositionally biased region" description="Polar residues" evidence="1">
    <location>
        <begin position="452"/>
        <end position="466"/>
    </location>
</feature>
<feature type="compositionally biased region" description="Basic and acidic residues" evidence="1">
    <location>
        <begin position="472"/>
        <end position="483"/>
    </location>
</feature>
<keyword id="KW-1185">Reference proteome</keyword>
<keyword id="KW-0833">Ubl conjugation pathway</keyword>
<reference key="1">
    <citation type="journal article" date="2004" name="Mol. Microbiol.">
        <title>A role for creD, a carbon catabolite repression gene from Aspergillus nidulans, in ubiquitination.</title>
        <authorList>
            <person name="Boase N.A."/>
            <person name="Kelly J.M."/>
        </authorList>
    </citation>
    <scope>NUCLEOTIDE SEQUENCE [GENOMIC DNA]</scope>
    <scope>FUNCTION</scope>
    <scope>INTERACTION WITH HULA</scope>
</reference>
<reference key="2">
    <citation type="journal article" date="2005" name="Nature">
        <title>Sequencing of Aspergillus nidulans and comparative analysis with A. fumigatus and A. oryzae.</title>
        <authorList>
            <person name="Galagan J.E."/>
            <person name="Calvo S.E."/>
            <person name="Cuomo C."/>
            <person name="Ma L.-J."/>
            <person name="Wortman J.R."/>
            <person name="Batzoglou S."/>
            <person name="Lee S.-I."/>
            <person name="Bastuerkmen M."/>
            <person name="Spevak C.C."/>
            <person name="Clutterbuck J."/>
            <person name="Kapitonov V."/>
            <person name="Jurka J."/>
            <person name="Scazzocchio C."/>
            <person name="Farman M.L."/>
            <person name="Butler J."/>
            <person name="Purcell S."/>
            <person name="Harris S."/>
            <person name="Braus G.H."/>
            <person name="Draht O."/>
            <person name="Busch S."/>
            <person name="D'Enfert C."/>
            <person name="Bouchier C."/>
            <person name="Goldman G.H."/>
            <person name="Bell-Pedersen D."/>
            <person name="Griffiths-Jones S."/>
            <person name="Doonan J.H."/>
            <person name="Yu J."/>
            <person name="Vienken K."/>
            <person name="Pain A."/>
            <person name="Freitag M."/>
            <person name="Selker E.U."/>
            <person name="Archer D.B."/>
            <person name="Penalva M.A."/>
            <person name="Oakley B.R."/>
            <person name="Momany M."/>
            <person name="Tanaka T."/>
            <person name="Kumagai T."/>
            <person name="Asai K."/>
            <person name="Machida M."/>
            <person name="Nierman W.C."/>
            <person name="Denning D.W."/>
            <person name="Caddick M.X."/>
            <person name="Hynes M."/>
            <person name="Paoletti M."/>
            <person name="Fischer R."/>
            <person name="Miller B.L."/>
            <person name="Dyer P.S."/>
            <person name="Sachs M.S."/>
            <person name="Osmani S.A."/>
            <person name="Birren B.W."/>
        </authorList>
    </citation>
    <scope>NUCLEOTIDE SEQUENCE [LARGE SCALE GENOMIC DNA]</scope>
    <source>
        <strain>FGSC A4 / ATCC 38163 / CBS 112.46 / NRRL 194 / M139</strain>
    </source>
</reference>
<reference key="3">
    <citation type="journal article" date="2009" name="Fungal Genet. Biol.">
        <title>The 2008 update of the Aspergillus nidulans genome annotation: a community effort.</title>
        <authorList>
            <person name="Wortman J.R."/>
            <person name="Gilsenan J.M."/>
            <person name="Joardar V."/>
            <person name="Deegan J."/>
            <person name="Clutterbuck J."/>
            <person name="Andersen M.R."/>
            <person name="Archer D."/>
            <person name="Bencina M."/>
            <person name="Braus G."/>
            <person name="Coutinho P."/>
            <person name="von Dohren H."/>
            <person name="Doonan J."/>
            <person name="Driessen A.J."/>
            <person name="Durek P."/>
            <person name="Espeso E."/>
            <person name="Fekete E."/>
            <person name="Flipphi M."/>
            <person name="Estrada C.G."/>
            <person name="Geysens S."/>
            <person name="Goldman G."/>
            <person name="de Groot P.W."/>
            <person name="Hansen K."/>
            <person name="Harris S.D."/>
            <person name="Heinekamp T."/>
            <person name="Helmstaedt K."/>
            <person name="Henrissat B."/>
            <person name="Hofmann G."/>
            <person name="Homan T."/>
            <person name="Horio T."/>
            <person name="Horiuchi H."/>
            <person name="James S."/>
            <person name="Jones M."/>
            <person name="Karaffa L."/>
            <person name="Karanyi Z."/>
            <person name="Kato M."/>
            <person name="Keller N."/>
            <person name="Kelly D.E."/>
            <person name="Kiel J.A."/>
            <person name="Kim J.M."/>
            <person name="van der Klei I.J."/>
            <person name="Klis F.M."/>
            <person name="Kovalchuk A."/>
            <person name="Krasevec N."/>
            <person name="Kubicek C.P."/>
            <person name="Liu B."/>
            <person name="Maccabe A."/>
            <person name="Meyer V."/>
            <person name="Mirabito P."/>
            <person name="Miskei M."/>
            <person name="Mos M."/>
            <person name="Mullins J."/>
            <person name="Nelson D.R."/>
            <person name="Nielsen J."/>
            <person name="Oakley B.R."/>
            <person name="Osmani S.A."/>
            <person name="Pakula T."/>
            <person name="Paszewski A."/>
            <person name="Paulsen I."/>
            <person name="Pilsyk S."/>
            <person name="Pocsi I."/>
            <person name="Punt P.J."/>
            <person name="Ram A.F."/>
            <person name="Ren Q."/>
            <person name="Robellet X."/>
            <person name="Robson G."/>
            <person name="Seiboth B."/>
            <person name="van Solingen P."/>
            <person name="Specht T."/>
            <person name="Sun J."/>
            <person name="Taheri-Talesh N."/>
            <person name="Takeshita N."/>
            <person name="Ussery D."/>
            <person name="vanKuyk P.A."/>
            <person name="Visser H."/>
            <person name="van de Vondervoort P.J."/>
            <person name="de Vries R.P."/>
            <person name="Walton J."/>
            <person name="Xiang X."/>
            <person name="Xiong Y."/>
            <person name="Zeng A.P."/>
            <person name="Brandt B.W."/>
            <person name="Cornell M.J."/>
            <person name="van den Hondel C.A."/>
            <person name="Visser J."/>
            <person name="Oliver S.G."/>
            <person name="Turner G."/>
        </authorList>
    </citation>
    <scope>GENOME REANNOTATION</scope>
    <source>
        <strain>FGSC A4 / ATCC 38163 / CBS 112.46 / NRRL 194 / M139</strain>
    </source>
</reference>